<evidence type="ECO:0000250" key="1">
    <source>
        <dbReference type="UniProtKB" id="B8M9J8"/>
    </source>
</evidence>
<evidence type="ECO:0000250" key="2">
    <source>
        <dbReference type="UniProtKB" id="L0E4H0"/>
    </source>
</evidence>
<evidence type="ECO:0000269" key="3">
    <source>
    </source>
</evidence>
<evidence type="ECO:0000269" key="4">
    <source>
    </source>
</evidence>
<evidence type="ECO:0000269" key="5">
    <source>
    </source>
</evidence>
<evidence type="ECO:0000303" key="6">
    <source>
    </source>
</evidence>
<evidence type="ECO:0000305" key="7"/>
<organism>
    <name type="scientific">Aspergillus novofumigatus (strain IBT 16806)</name>
    <dbReference type="NCBI Taxonomy" id="1392255"/>
    <lineage>
        <taxon>Eukaryota</taxon>
        <taxon>Fungi</taxon>
        <taxon>Dikarya</taxon>
        <taxon>Ascomycota</taxon>
        <taxon>Pezizomycotina</taxon>
        <taxon>Eurotiomycetes</taxon>
        <taxon>Eurotiomycetidae</taxon>
        <taxon>Eurotiales</taxon>
        <taxon>Aspergillaceae</taxon>
        <taxon>Aspergillus</taxon>
        <taxon>Aspergillus subgen. Fumigati</taxon>
    </lineage>
</organism>
<keyword id="KW-0274">FAD</keyword>
<keyword id="KW-0285">Flavoprotein</keyword>
<keyword id="KW-0503">Monooxygenase</keyword>
<keyword id="KW-0560">Oxidoreductase</keyword>
<keyword id="KW-1185">Reference proteome</keyword>
<sequence length="504" mass="55808">MGSITESQEPLRFFATGDKHESASSARPPTYVQVLIVGAGFAGLMAALECWRKGHDVVGIVERNQGPNYSGDLIIIQPSALEIMKHWPQMRRELEEDKVTVGTYYYRHNGELVDGPAHPNYNAPEYVAEREARPGGFPYVGAVQIRKKFYRMLLRQVARLGFRVDYGQRVESYFEDDSAGVAGVRMTDGSIRKAHVVVAADGFRSRSELLIADEYLPTQSSGMSVYRTAFPAKLALADEAVRQRWGGKHTYEFWMGSGMHIGLYLSPELAAFGITPRDHLLAKDKVARESWDPDVSPDEVIDVLRRAKVPGDSIIHWPLRWRNLRREWVSPGGRVVQIGDAAHSTVPSSAAGGTLALEDAITLATSLQIASSPAAASGPGAGAGAGVPLGTRVYNLLRYERASCTQKMAFVNAQVLGDTTDWDAVRADPSKVRVRYPKWFFRHDPEGYVYEKYGQAFAHLVSGAEFHNTNIPPGHQFVHWTLEGIHREMAAGKKVEDLLDGDWT</sequence>
<feature type="chain" id="PRO_0000453481" description="FAD-dependent monooxygenase nsrK">
    <location>
        <begin position="1"/>
        <end position="504"/>
    </location>
</feature>
<feature type="active site" evidence="2">
    <location>
        <position position="227"/>
    </location>
</feature>
<feature type="binding site" evidence="1">
    <location>
        <position position="146"/>
    </location>
    <ligand>
        <name>FAD</name>
        <dbReference type="ChEBI" id="CHEBI:57692"/>
    </ligand>
</feature>
<feature type="binding site" evidence="1">
    <location>
        <position position="340"/>
    </location>
    <ligand>
        <name>FAD</name>
        <dbReference type="ChEBI" id="CHEBI:57692"/>
    </ligand>
</feature>
<feature type="binding site" evidence="1">
    <location>
        <position position="353"/>
    </location>
    <ligand>
        <name>FAD</name>
        <dbReference type="ChEBI" id="CHEBI:57692"/>
    </ligand>
</feature>
<gene>
    <name evidence="6" type="primary">nsrK</name>
    <name type="ORF">P174DRAFT_460883</name>
</gene>
<reference key="1">
    <citation type="journal article" date="2018" name="Proc. Natl. Acad. Sci. U.S.A.">
        <title>Linking secondary metabolites to gene clusters through genome sequencing of six diverse Aspergillus species.</title>
        <authorList>
            <person name="Kjaerboelling I."/>
            <person name="Vesth T.C."/>
            <person name="Frisvad J.C."/>
            <person name="Nybo J.L."/>
            <person name="Theobald S."/>
            <person name="Kuo A."/>
            <person name="Bowyer P."/>
            <person name="Matsuda Y."/>
            <person name="Mondo S."/>
            <person name="Lyhne E.K."/>
            <person name="Kogle M.E."/>
            <person name="Clum A."/>
            <person name="Lipzen A."/>
            <person name="Salamov A."/>
            <person name="Ngan C.Y."/>
            <person name="Daum C."/>
            <person name="Chiniquy J."/>
            <person name="Barry K."/>
            <person name="LaButti K."/>
            <person name="Haridas S."/>
            <person name="Simmons B.A."/>
            <person name="Magnuson J.K."/>
            <person name="Mortensen U.H."/>
            <person name="Larsen T.O."/>
            <person name="Grigoriev I.V."/>
            <person name="Baker S.E."/>
            <person name="Andersen M.R."/>
        </authorList>
    </citation>
    <scope>NUCLEOTIDE SEQUENCE [LARGE SCALE GENOMIC DNA]</scope>
    <source>
        <strain>IBT 16806</strain>
    </source>
</reference>
<reference key="2">
    <citation type="journal article" date="2018" name="Org. Lett.">
        <title>Genetic characterization of neosartorin biosynthesis provides insight into heterodimeric natural product generation.</title>
        <authorList>
            <person name="Matsuda Y."/>
            <person name="Gotfredsen C.H."/>
            <person name="Larsen T.O."/>
        </authorList>
    </citation>
    <scope>FUNCTION</scope>
    <scope>DISRUPTION PHENOTYPE</scope>
    <scope>PATHWAY</scope>
</reference>
<reference key="3">
    <citation type="journal article" date="2020" name="Org. Lett.">
        <title>Unraveling the fungal strategy for tetrahydroxanthone biosynthesis and diversification.</title>
        <authorList>
            <person name="Wei X."/>
            <person name="Matsuda Y."/>
        </authorList>
    </citation>
    <scope>FUNCTION</scope>
    <scope>CATALYTIC ACTIVITY</scope>
    <scope>PATHWAY</scope>
</reference>
<reference key="4">
    <citation type="journal article" date="2021" name="J. Nat. Prod.">
        <title>Heterologous biosynthesis of tetrahydroxanthone dimers: determination of key factors for selective or divergent synthesis.</title>
        <authorList>
            <person name="Wei X."/>
            <person name="Chen X."/>
            <person name="Chen L."/>
            <person name="Yan D."/>
            <person name="Wang W.G."/>
            <person name="Matsuda Y."/>
        </authorList>
    </citation>
    <scope>FUNCTION</scope>
    <scope>CATALYTIC ACTIVITY</scope>
    <scope>PATHWAY</scope>
</reference>
<proteinExistence type="evidence at protein level"/>
<protein>
    <recommendedName>
        <fullName evidence="6">FAD-dependent monooxygenase nsrK</fullName>
        <shortName evidence="6">FMO nsrK</shortName>
        <ecNumber evidence="4 5">1.-.-.-</ecNumber>
    </recommendedName>
    <alternativeName>
        <fullName evidence="6">Neosartorin biosynthesis cluster protein K</fullName>
    </alternativeName>
</protein>
<name>NSRK_ASPN1</name>
<comment type="function">
    <text evidence="3 4 5">FAD-dependent monooxygenase; part of the gene cluster that mediates the biosynthesis of the tetrahydroxanthone dimer neosartorin, which exhibits antibacterial activity (PubMed:30394754, PubMed:32105084, PubMed:33891392). The two different monomeric units appear to be synthesized by the same set of enzymes, among which the Baeyer-Villiger monooxygenase nsrF is the key enzyme for the divergence of the biosynthetic routes (PubMed:32105084). The pathway begins with the synthesis of atrochrysone thioester by the polyketide synthase nsrB (PubMed:32105084). The atrochrysone carboxyl ACP thioesterase nsrC then breaks the thioester bond and releases the atrochrysone carboxylic acid from AacuL (PubMed:32105084). Atrochrysone carboxylic acid is decarboxylated by the decarboxylase nsrE, and oxidized by the anthrone oxygenase nsrD to yield emodin (PubMed:32105084). Emodin is then reduced to emodin hydroquinone by the oxidoreductase nsrR (PubMed:32105084). A-ring reduction by the short chain dehydrogenase nsrJ, dehydration by the scytalone dehydratase-like protein nsrI and probable spontaneous re-oxidation, results in overall deoxygenation to chrysophanol (PubMed:32105084). The Baeyer-Villiger monooxygenase nsrF accepts chrysophanol as a substrate to insert one oxygen atom at two different positions to yield the precursors of both monomric units (PubMed:30394754, PubMed:32105084, PubMed:33891392). NsrF is promiscuous/flexible in interacting with the 2 (non methylated and methylated) aromatic rings of chrysophanol, thus diverging the biosynthetic pathway at this point (PubMed:30394754, PubMed:32105084, PubMed:33891392). After the hydrolysis of the lactones, methylesterification by the methyltransferase nsrG yields respectively moniliphenone and 2,2',6'-trihydroxy-4-methyl-6-methoxya-cyldiphenylmethanone (PubMed:30394754, PubMed:32105084). The next steps are the hydroxylation by the FAD-dependent monooxygenase nsrK, followed by isomerization by the monooxygenase nsrQ (PubMed:32105084). The short chain dehydrogenase/reductase nsrO then catalyzes the C-5 ketoreduction to give the xanthone skeleton of blennolide C and 5-acetylblennolide A (PubMed:32105084). The acetyltransferase nsrL has a strict substrate specificity and uses only blennolide A but not blennolide C to yield 5-acetylblennolide A as the single-acetylated product (PubMed:30394754). In the final step of the biosynthesis, the heterodimerization of the 2 xanthones, blennolide C and 5-acetylblennolide A, is catalyzed by the cytochrome P450 monooxygenase nsrP (PubMed:30394754). NsrP can utilize at least three different xanthones as its substrates to perform the dimerization reaction (PubMed:30394754).</text>
</comment>
<comment type="cofactor">
    <cofactor evidence="7">
        <name>FAD</name>
        <dbReference type="ChEBI" id="CHEBI:57692"/>
    </cofactor>
</comment>
<comment type="pathway">
    <text evidence="3 4 5">Secondary metabolite biosynthesis.</text>
</comment>
<comment type="disruption phenotype">
    <text evidence="3">Impairs the production of neosartorin and accumulates two isomeric metabolites, moniliphenone and 2,2',6'-trihydroxy-4-methyl-6-methoxya-cyldiphenylmethanone.</text>
</comment>
<comment type="similarity">
    <text evidence="7">Belongs to the paxM FAD-dependent monooxygenase family.</text>
</comment>
<accession>A0A2I1C3T9</accession>
<dbReference type="EC" id="1.-.-.-" evidence="4 5"/>
<dbReference type="EMBL" id="MSZS01000005">
    <property type="protein sequence ID" value="PKX92299.1"/>
    <property type="molecule type" value="Genomic_DNA"/>
</dbReference>
<dbReference type="SMR" id="A0A2I1C3T9"/>
<dbReference type="STRING" id="1392255.A0A2I1C3T9"/>
<dbReference type="VEuPathDB" id="FungiDB:P174DRAFT_460883"/>
<dbReference type="OMA" id="ANESWVP"/>
<dbReference type="OrthoDB" id="16820at2759"/>
<dbReference type="Proteomes" id="UP000234474">
    <property type="component" value="Unassembled WGS sequence"/>
</dbReference>
<dbReference type="GO" id="GO:0071949">
    <property type="term" value="F:FAD binding"/>
    <property type="evidence" value="ECO:0007669"/>
    <property type="project" value="InterPro"/>
</dbReference>
<dbReference type="GO" id="GO:0004497">
    <property type="term" value="F:monooxygenase activity"/>
    <property type="evidence" value="ECO:0007669"/>
    <property type="project" value="UniProtKB-KW"/>
</dbReference>
<dbReference type="Gene3D" id="3.50.50.60">
    <property type="entry name" value="FAD/NAD(P)-binding domain"/>
    <property type="match status" value="1"/>
</dbReference>
<dbReference type="InterPro" id="IPR002938">
    <property type="entry name" value="FAD-bd"/>
</dbReference>
<dbReference type="InterPro" id="IPR050493">
    <property type="entry name" value="FAD-dep_Monooxygenase_BioMet"/>
</dbReference>
<dbReference type="InterPro" id="IPR036188">
    <property type="entry name" value="FAD/NAD-bd_sf"/>
</dbReference>
<dbReference type="PANTHER" id="PTHR13789:SF315">
    <property type="entry name" value="FAD-DEPENDENT MONOOXYGENASE MDPD"/>
    <property type="match status" value="1"/>
</dbReference>
<dbReference type="PANTHER" id="PTHR13789">
    <property type="entry name" value="MONOOXYGENASE"/>
    <property type="match status" value="1"/>
</dbReference>
<dbReference type="Pfam" id="PF01494">
    <property type="entry name" value="FAD_binding_3"/>
    <property type="match status" value="1"/>
</dbReference>
<dbReference type="PRINTS" id="PR00420">
    <property type="entry name" value="RNGMNOXGNASE"/>
</dbReference>
<dbReference type="SUPFAM" id="SSF51905">
    <property type="entry name" value="FAD/NAD(P)-binding domain"/>
    <property type="match status" value="1"/>
</dbReference>